<evidence type="ECO:0000250" key="1"/>
<evidence type="ECO:0000255" key="2">
    <source>
        <dbReference type="PROSITE-ProRule" id="PRU00198"/>
    </source>
</evidence>
<evidence type="ECO:0000305" key="3"/>
<keyword id="KW-0597">Phosphoprotein</keyword>
<keyword id="KW-0749">Sporulation</keyword>
<comment type="function">
    <text evidence="1">In the phosphorylated form it could act as an anti-anti-sigma factor that counteracts SpoIIAB and thus releases sigma f from inhibition.</text>
</comment>
<comment type="PTM">
    <text evidence="1">Phosphorylated by SpoIIAB on a serine residue.</text>
</comment>
<comment type="similarity">
    <text evidence="3">Belongs to the anti-sigma-factor antagonist family.</text>
</comment>
<feature type="chain" id="PRO_0000194199" description="Anti-sigma F factor antagonist">
    <location>
        <begin position="1"/>
        <end position="116"/>
    </location>
</feature>
<feature type="domain" description="STAS" evidence="2">
    <location>
        <begin position="3"/>
        <end position="113"/>
    </location>
</feature>
<feature type="modified residue" description="Phosphoserine" evidence="1">
    <location>
        <position position="58"/>
    </location>
</feature>
<organism>
    <name type="scientific">Heyndrickxia coagulans</name>
    <name type="common">Weizmannia coagulans</name>
    <dbReference type="NCBI Taxonomy" id="1398"/>
    <lineage>
        <taxon>Bacteria</taxon>
        <taxon>Bacillati</taxon>
        <taxon>Bacillota</taxon>
        <taxon>Bacilli</taxon>
        <taxon>Bacillales</taxon>
        <taxon>Bacillaceae</taxon>
        <taxon>Heyndrickxia</taxon>
    </lineage>
</organism>
<reference key="1">
    <citation type="journal article" date="1996" name="Gene">
        <title>Nucleotide sequence of the Bacillus coagulans homologue of the spoIIA operon of Bacillus subtilis.</title>
        <authorList>
            <person name="Park S.G."/>
            <person name="Yudkin M.D."/>
        </authorList>
    </citation>
    <scope>NUCLEOTIDE SEQUENCE [GENOMIC DNA]</scope>
    <source>
        <strain>ATCC 7050 / DSM 1 / JCM 2257 / CCUG 7417 / NBRC 12583 / NCIMB 9365 / NCTC 10334 / NRS 609</strain>
    </source>
</reference>
<accession>P70877</accession>
<sequence>MSLAIDLEVKKDVLCIRLQGELDHHTAESLRASVTKAIEENGIRHLVLNLEQLSFMDSSGLGVILGRYKQIKQKNGEMIVCAISPAVKRLFELSGLFKIIRLDESEQYALHRLGVA</sequence>
<name>SP2AA_HEYCO</name>
<dbReference type="EMBL" id="Z54161">
    <property type="protein sequence ID" value="CAA90872.1"/>
    <property type="molecule type" value="Genomic_DNA"/>
</dbReference>
<dbReference type="PIR" id="JC5188">
    <property type="entry name" value="JC5188"/>
</dbReference>
<dbReference type="RefSeq" id="WP_014098106.1">
    <property type="nucleotide sequence ID" value="NZ_WMBS01000007.1"/>
</dbReference>
<dbReference type="SMR" id="P70877"/>
<dbReference type="STRING" id="1398.AB434_3357"/>
<dbReference type="GeneID" id="93259613"/>
<dbReference type="GO" id="GO:0043856">
    <property type="term" value="F:anti-sigma factor antagonist activity"/>
    <property type="evidence" value="ECO:0007669"/>
    <property type="project" value="InterPro"/>
</dbReference>
<dbReference type="GO" id="GO:0045152">
    <property type="term" value="F:antisigma factor binding"/>
    <property type="evidence" value="ECO:0007669"/>
    <property type="project" value="InterPro"/>
</dbReference>
<dbReference type="GO" id="GO:0030435">
    <property type="term" value="P:sporulation resulting in formation of a cellular spore"/>
    <property type="evidence" value="ECO:0007669"/>
    <property type="project" value="UniProtKB-KW"/>
</dbReference>
<dbReference type="Gene3D" id="3.30.750.24">
    <property type="entry name" value="STAS domain"/>
    <property type="match status" value="1"/>
</dbReference>
<dbReference type="InterPro" id="IPR003658">
    <property type="entry name" value="Anti-sigma_ant"/>
</dbReference>
<dbReference type="InterPro" id="IPR014237">
    <property type="entry name" value="Anti-sigma_F_ant"/>
</dbReference>
<dbReference type="InterPro" id="IPR002645">
    <property type="entry name" value="STAS_dom"/>
</dbReference>
<dbReference type="InterPro" id="IPR036513">
    <property type="entry name" value="STAS_dom_sf"/>
</dbReference>
<dbReference type="NCBIfam" id="TIGR00377">
    <property type="entry name" value="ant_ant_sig"/>
    <property type="match status" value="1"/>
</dbReference>
<dbReference type="NCBIfam" id="TIGR02886">
    <property type="entry name" value="spore_II_AA"/>
    <property type="match status" value="1"/>
</dbReference>
<dbReference type="PANTHER" id="PTHR33495:SF2">
    <property type="entry name" value="ANTI-SIGMA FACTOR ANTAGONIST TM_1081-RELATED"/>
    <property type="match status" value="1"/>
</dbReference>
<dbReference type="PANTHER" id="PTHR33495">
    <property type="entry name" value="ANTI-SIGMA FACTOR ANTAGONIST TM_1081-RELATED-RELATED"/>
    <property type="match status" value="1"/>
</dbReference>
<dbReference type="Pfam" id="PF01740">
    <property type="entry name" value="STAS"/>
    <property type="match status" value="1"/>
</dbReference>
<dbReference type="SUPFAM" id="SSF52091">
    <property type="entry name" value="SpoIIaa-like"/>
    <property type="match status" value="1"/>
</dbReference>
<dbReference type="PROSITE" id="PS50801">
    <property type="entry name" value="STAS"/>
    <property type="match status" value="1"/>
</dbReference>
<proteinExistence type="inferred from homology"/>
<protein>
    <recommendedName>
        <fullName>Anti-sigma F factor antagonist</fullName>
    </recommendedName>
    <alternativeName>
        <fullName>Stage II sporulation protein AA</fullName>
    </alternativeName>
</protein>
<gene>
    <name type="primary">spoIIAA</name>
</gene>